<protein>
    <recommendedName>
        <fullName evidence="1">Uroporphyrinogen decarboxylase</fullName>
        <shortName evidence="1">UPD</shortName>
        <shortName evidence="1">URO-D</shortName>
        <ecNumber evidence="1">4.1.1.37</ecNumber>
    </recommendedName>
</protein>
<accession>P46809</accession>
<dbReference type="EC" id="4.1.1.37" evidence="1"/>
<dbReference type="EMBL" id="U15181">
    <property type="protein sequence ID" value="AAA62959.1"/>
    <property type="status" value="ALT_INIT"/>
    <property type="molecule type" value="Genomic_DNA"/>
</dbReference>
<dbReference type="EMBL" id="AL583920">
    <property type="protein sequence ID" value="CAC31424.1"/>
    <property type="molecule type" value="Genomic_DNA"/>
</dbReference>
<dbReference type="PIR" id="E87039">
    <property type="entry name" value="E87039"/>
</dbReference>
<dbReference type="RefSeq" id="NP_301769.1">
    <property type="nucleotide sequence ID" value="NC_002677.1"/>
</dbReference>
<dbReference type="RefSeq" id="WP_010908093.1">
    <property type="nucleotide sequence ID" value="NC_002677.1"/>
</dbReference>
<dbReference type="SMR" id="P46809"/>
<dbReference type="STRING" id="272631.gene:17574869"/>
<dbReference type="KEGG" id="mle:ML1043"/>
<dbReference type="PATRIC" id="fig|272631.5.peg.1875"/>
<dbReference type="Leproma" id="ML1043"/>
<dbReference type="eggNOG" id="COG0407">
    <property type="taxonomic scope" value="Bacteria"/>
</dbReference>
<dbReference type="HOGENOM" id="CLU_040933_0_1_11"/>
<dbReference type="OrthoDB" id="9806656at2"/>
<dbReference type="UniPathway" id="UPA00251">
    <property type="reaction ID" value="UER00321"/>
</dbReference>
<dbReference type="Proteomes" id="UP000000806">
    <property type="component" value="Chromosome"/>
</dbReference>
<dbReference type="GO" id="GO:0005829">
    <property type="term" value="C:cytosol"/>
    <property type="evidence" value="ECO:0007669"/>
    <property type="project" value="TreeGrafter"/>
</dbReference>
<dbReference type="GO" id="GO:0004853">
    <property type="term" value="F:uroporphyrinogen decarboxylase activity"/>
    <property type="evidence" value="ECO:0007669"/>
    <property type="project" value="UniProtKB-UniRule"/>
</dbReference>
<dbReference type="GO" id="GO:0006782">
    <property type="term" value="P:protoporphyrinogen IX biosynthetic process"/>
    <property type="evidence" value="ECO:0007669"/>
    <property type="project" value="UniProtKB-UniRule"/>
</dbReference>
<dbReference type="CDD" id="cd00717">
    <property type="entry name" value="URO-D"/>
    <property type="match status" value="1"/>
</dbReference>
<dbReference type="FunFam" id="3.20.20.210:FF:000007">
    <property type="entry name" value="Uroporphyrinogen decarboxylase"/>
    <property type="match status" value="1"/>
</dbReference>
<dbReference type="Gene3D" id="3.20.20.210">
    <property type="match status" value="1"/>
</dbReference>
<dbReference type="HAMAP" id="MF_00218">
    <property type="entry name" value="URO_D"/>
    <property type="match status" value="1"/>
</dbReference>
<dbReference type="InterPro" id="IPR038071">
    <property type="entry name" value="UROD/MetE-like_sf"/>
</dbReference>
<dbReference type="InterPro" id="IPR006361">
    <property type="entry name" value="Uroporphyrinogen_deCO2ase_HemE"/>
</dbReference>
<dbReference type="InterPro" id="IPR000257">
    <property type="entry name" value="Uroporphyrinogen_deCOase"/>
</dbReference>
<dbReference type="NCBIfam" id="TIGR01464">
    <property type="entry name" value="hemE"/>
    <property type="match status" value="1"/>
</dbReference>
<dbReference type="PANTHER" id="PTHR21091">
    <property type="entry name" value="METHYLTETRAHYDROFOLATE:HOMOCYSTEINE METHYLTRANSFERASE RELATED"/>
    <property type="match status" value="1"/>
</dbReference>
<dbReference type="PANTHER" id="PTHR21091:SF169">
    <property type="entry name" value="UROPORPHYRINOGEN DECARBOXYLASE"/>
    <property type="match status" value="1"/>
</dbReference>
<dbReference type="Pfam" id="PF01208">
    <property type="entry name" value="URO-D"/>
    <property type="match status" value="1"/>
</dbReference>
<dbReference type="SUPFAM" id="SSF51726">
    <property type="entry name" value="UROD/MetE-like"/>
    <property type="match status" value="1"/>
</dbReference>
<dbReference type="PROSITE" id="PS00906">
    <property type="entry name" value="UROD_1"/>
    <property type="match status" value="1"/>
</dbReference>
<dbReference type="PROSITE" id="PS00907">
    <property type="entry name" value="UROD_2"/>
    <property type="match status" value="1"/>
</dbReference>
<name>DCUP_MYCLE</name>
<keyword id="KW-0963">Cytoplasm</keyword>
<keyword id="KW-0210">Decarboxylase</keyword>
<keyword id="KW-0456">Lyase</keyword>
<keyword id="KW-0627">Porphyrin biosynthesis</keyword>
<keyword id="KW-1185">Reference proteome</keyword>
<proteinExistence type="inferred from homology"/>
<gene>
    <name evidence="1" type="primary">hemE</name>
    <name type="ordered locus">ML1043</name>
</gene>
<sequence length="357" mass="38211">MSTRRELLESPYLAAVSGRKPCRVPVWFMRQAGRSLPEYRALRERYSMLAACFEPEVACEITLQPLRRYDVDAAILFSDIVVPLCAAGIDLDIVPDVGPVIGDPVRTATDIHAMKPLEPQAIQPIFQAISLLVAALGDVPLIGFAGAPFTLASYLVEGGPSRNHPRTKAMMLAEPASWHTLMDKLTDLTLGFLLGQIDAGVDAIQVFDSWAGTLSLSDYRQYVLPHSARIFATVAEHGVPMTHFGVGTADLLGAMSAAVRSGEKPGHQAVVGVDWRTSLTDAAARVEPCTALQGNLDPVVLLAGWPAVERVARTVVDDGRRAVVAGAAGHVFNLGHGVLPETDPGVLSELVSFIHSL</sequence>
<organism>
    <name type="scientific">Mycobacterium leprae (strain TN)</name>
    <dbReference type="NCBI Taxonomy" id="272631"/>
    <lineage>
        <taxon>Bacteria</taxon>
        <taxon>Bacillati</taxon>
        <taxon>Actinomycetota</taxon>
        <taxon>Actinomycetes</taxon>
        <taxon>Mycobacteriales</taxon>
        <taxon>Mycobacteriaceae</taxon>
        <taxon>Mycobacterium</taxon>
    </lineage>
</organism>
<comment type="function">
    <text evidence="1">Catalyzes the decarboxylation of four acetate groups of uroporphyrinogen-III to yield coproporphyrinogen-III.</text>
</comment>
<comment type="catalytic activity">
    <reaction evidence="1">
        <text>uroporphyrinogen III + 4 H(+) = coproporphyrinogen III + 4 CO2</text>
        <dbReference type="Rhea" id="RHEA:19865"/>
        <dbReference type="ChEBI" id="CHEBI:15378"/>
        <dbReference type="ChEBI" id="CHEBI:16526"/>
        <dbReference type="ChEBI" id="CHEBI:57308"/>
        <dbReference type="ChEBI" id="CHEBI:57309"/>
        <dbReference type="EC" id="4.1.1.37"/>
    </reaction>
</comment>
<comment type="pathway">
    <text evidence="1">Porphyrin-containing compound metabolism; protoporphyrin-IX biosynthesis; coproporphyrinogen-III from 5-aminolevulinate: step 4/4.</text>
</comment>
<comment type="subunit">
    <text evidence="1">Homodimer.</text>
</comment>
<comment type="subcellular location">
    <subcellularLocation>
        <location evidence="1">Cytoplasm</location>
    </subcellularLocation>
</comment>
<comment type="similarity">
    <text evidence="1">Belongs to the uroporphyrinogen decarboxylase family.</text>
</comment>
<comment type="sequence caution" evidence="2">
    <conflict type="erroneous initiation">
        <sequence resource="EMBL-CDS" id="AAA62959"/>
    </conflict>
</comment>
<feature type="chain" id="PRO_0000187615" description="Uroporphyrinogen decarboxylase">
    <location>
        <begin position="1"/>
        <end position="357"/>
    </location>
</feature>
<feature type="binding site" evidence="1">
    <location>
        <begin position="30"/>
        <end position="34"/>
    </location>
    <ligand>
        <name>substrate</name>
    </ligand>
</feature>
<feature type="binding site" evidence="1">
    <location>
        <position position="79"/>
    </location>
    <ligand>
        <name>substrate</name>
    </ligand>
</feature>
<feature type="binding site" evidence="1">
    <location>
        <position position="154"/>
    </location>
    <ligand>
        <name>substrate</name>
    </ligand>
</feature>
<feature type="binding site" evidence="1">
    <location>
        <position position="209"/>
    </location>
    <ligand>
        <name>substrate</name>
    </ligand>
</feature>
<feature type="binding site" evidence="1">
    <location>
        <position position="336"/>
    </location>
    <ligand>
        <name>substrate</name>
    </ligand>
</feature>
<feature type="site" description="Transition state stabilizer" evidence="1">
    <location>
        <position position="79"/>
    </location>
</feature>
<reference key="1">
    <citation type="submission" date="1994-09" db="EMBL/GenBank/DDBJ databases">
        <authorList>
            <person name="Smith D.R."/>
            <person name="Robison K."/>
        </authorList>
    </citation>
    <scope>NUCLEOTIDE SEQUENCE [GENOMIC DNA]</scope>
</reference>
<reference key="2">
    <citation type="journal article" date="2001" name="Nature">
        <title>Massive gene decay in the leprosy bacillus.</title>
        <authorList>
            <person name="Cole S.T."/>
            <person name="Eiglmeier K."/>
            <person name="Parkhill J."/>
            <person name="James K.D."/>
            <person name="Thomson N.R."/>
            <person name="Wheeler P.R."/>
            <person name="Honore N."/>
            <person name="Garnier T."/>
            <person name="Churcher C.M."/>
            <person name="Harris D.E."/>
            <person name="Mungall K.L."/>
            <person name="Basham D."/>
            <person name="Brown D."/>
            <person name="Chillingworth T."/>
            <person name="Connor R."/>
            <person name="Davies R.M."/>
            <person name="Devlin K."/>
            <person name="Duthoy S."/>
            <person name="Feltwell T."/>
            <person name="Fraser A."/>
            <person name="Hamlin N."/>
            <person name="Holroyd S."/>
            <person name="Hornsby T."/>
            <person name="Jagels K."/>
            <person name="Lacroix C."/>
            <person name="Maclean J."/>
            <person name="Moule S."/>
            <person name="Murphy L.D."/>
            <person name="Oliver K."/>
            <person name="Quail M.A."/>
            <person name="Rajandream M.A."/>
            <person name="Rutherford K.M."/>
            <person name="Rutter S."/>
            <person name="Seeger K."/>
            <person name="Simon S."/>
            <person name="Simmonds M."/>
            <person name="Skelton J."/>
            <person name="Squares R."/>
            <person name="Squares S."/>
            <person name="Stevens K."/>
            <person name="Taylor K."/>
            <person name="Whitehead S."/>
            <person name="Woodward J.R."/>
            <person name="Barrell B.G."/>
        </authorList>
    </citation>
    <scope>NUCLEOTIDE SEQUENCE [LARGE SCALE GENOMIC DNA]</scope>
    <source>
        <strain>TN</strain>
    </source>
</reference>
<evidence type="ECO:0000255" key="1">
    <source>
        <dbReference type="HAMAP-Rule" id="MF_00218"/>
    </source>
</evidence>
<evidence type="ECO:0000305" key="2"/>